<evidence type="ECO:0000255" key="1">
    <source>
        <dbReference type="HAMAP-Rule" id="MF_01528"/>
    </source>
</evidence>
<accession>A9MH10</accession>
<feature type="chain" id="PRO_1000087586" description="Multidrug resistance protein MdtG">
    <location>
        <begin position="1"/>
        <end position="404"/>
    </location>
</feature>
<feature type="transmembrane region" description="Helical" evidence="1">
    <location>
        <begin position="19"/>
        <end position="39"/>
    </location>
</feature>
<feature type="transmembrane region" description="Helical" evidence="1">
    <location>
        <begin position="56"/>
        <end position="76"/>
    </location>
</feature>
<feature type="transmembrane region" description="Helical" evidence="1">
    <location>
        <begin position="90"/>
        <end position="110"/>
    </location>
</feature>
<feature type="transmembrane region" description="Helical" evidence="1">
    <location>
        <begin position="113"/>
        <end position="133"/>
    </location>
</feature>
<feature type="transmembrane region" description="Helical" evidence="1">
    <location>
        <begin position="144"/>
        <end position="164"/>
    </location>
</feature>
<feature type="transmembrane region" description="Helical" evidence="1">
    <location>
        <begin position="171"/>
        <end position="191"/>
    </location>
</feature>
<feature type="transmembrane region" description="Helical" evidence="1">
    <location>
        <begin position="222"/>
        <end position="242"/>
    </location>
</feature>
<feature type="transmembrane region" description="Helical" evidence="1">
    <location>
        <begin position="254"/>
        <end position="274"/>
    </location>
</feature>
<feature type="transmembrane region" description="Helical" evidence="1">
    <location>
        <begin position="288"/>
        <end position="308"/>
    </location>
</feature>
<feature type="transmembrane region" description="Helical" evidence="1">
    <location>
        <begin position="317"/>
        <end position="337"/>
    </location>
</feature>
<feature type="transmembrane region" description="Helical" evidence="1">
    <location>
        <begin position="376"/>
        <end position="396"/>
    </location>
</feature>
<name>MDTG_SALAR</name>
<organism>
    <name type="scientific">Salmonella arizonae (strain ATCC BAA-731 / CDC346-86 / RSK2980)</name>
    <dbReference type="NCBI Taxonomy" id="41514"/>
    <lineage>
        <taxon>Bacteria</taxon>
        <taxon>Pseudomonadati</taxon>
        <taxon>Pseudomonadota</taxon>
        <taxon>Gammaproteobacteria</taxon>
        <taxon>Enterobacterales</taxon>
        <taxon>Enterobacteriaceae</taxon>
        <taxon>Salmonella</taxon>
    </lineage>
</organism>
<keyword id="KW-0997">Cell inner membrane</keyword>
<keyword id="KW-1003">Cell membrane</keyword>
<keyword id="KW-0472">Membrane</keyword>
<keyword id="KW-1185">Reference proteome</keyword>
<keyword id="KW-0812">Transmembrane</keyword>
<keyword id="KW-1133">Transmembrane helix</keyword>
<keyword id="KW-0813">Transport</keyword>
<protein>
    <recommendedName>
        <fullName evidence="1">Multidrug resistance protein MdtG</fullName>
    </recommendedName>
</protein>
<proteinExistence type="inferred from homology"/>
<sequence>MSPSDVPINWKRNLTVTWLGCFLTGAAFSLVMPFLPLYVEQLGVTGHSALNMWSGLVFSITFLFSAIASPFWGGLADRKGRKIMLLRSALGMAIVMLLMGMAQNIWQFLILRALLGLLGGFIPNANALIATQVPRNKSGWALGTLSTGGVSGALLGPLAGGLLADHYGLRPVFFITASVLFICFLLTFFFIRENFQPVSKKEMLHVREVVASLKNPRLVLSLFVTTLIIQVATGSIAPILTLYVRELAGNVSNIAFISGMIASVPGVAALLSAPRLGKLGDRIGPEKILIVALIISVLLLIPMSFVQTPWQLALLRFLLGAADGALLPAVQTLLVYNSTNQIAGRIFSYNQSFRDIGNVTGPLMGAAISASYGFRAVFCVTAGVVLFNAIYSWNSLQRRRLATE</sequence>
<reference key="1">
    <citation type="submission" date="2007-11" db="EMBL/GenBank/DDBJ databases">
        <authorList>
            <consortium name="The Salmonella enterica serovar Arizonae Genome Sequencing Project"/>
            <person name="McClelland M."/>
            <person name="Sanderson E.K."/>
            <person name="Porwollik S."/>
            <person name="Spieth J."/>
            <person name="Clifton W.S."/>
            <person name="Fulton R."/>
            <person name="Chunyan W."/>
            <person name="Wollam A."/>
            <person name="Shah N."/>
            <person name="Pepin K."/>
            <person name="Bhonagiri V."/>
            <person name="Nash W."/>
            <person name="Johnson M."/>
            <person name="Thiruvilangam P."/>
            <person name="Wilson R."/>
        </authorList>
    </citation>
    <scope>NUCLEOTIDE SEQUENCE [LARGE SCALE GENOMIC DNA]</scope>
    <source>
        <strain>ATCC BAA-731 / CDC346-86 / RSK2980</strain>
    </source>
</reference>
<comment type="subcellular location">
    <subcellularLocation>
        <location evidence="1">Cell inner membrane</location>
        <topology evidence="1">Multi-pass membrane protein</topology>
    </subcellularLocation>
</comment>
<comment type="similarity">
    <text evidence="1">Belongs to the major facilitator superfamily. DHA1 family. MdtG (TC 2.A.1.2.20) subfamily.</text>
</comment>
<dbReference type="EMBL" id="CP000880">
    <property type="protein sequence ID" value="ABX21729.1"/>
    <property type="molecule type" value="Genomic_DNA"/>
</dbReference>
<dbReference type="SMR" id="A9MH10"/>
<dbReference type="STRING" id="41514.SARI_01844"/>
<dbReference type="KEGG" id="ses:SARI_01844"/>
<dbReference type="HOGENOM" id="CLU_001265_57_3_6"/>
<dbReference type="Proteomes" id="UP000002084">
    <property type="component" value="Chromosome"/>
</dbReference>
<dbReference type="GO" id="GO:0005886">
    <property type="term" value="C:plasma membrane"/>
    <property type="evidence" value="ECO:0007669"/>
    <property type="project" value="UniProtKB-SubCell"/>
</dbReference>
<dbReference type="GO" id="GO:0022857">
    <property type="term" value="F:transmembrane transporter activity"/>
    <property type="evidence" value="ECO:0007669"/>
    <property type="project" value="UniProtKB-UniRule"/>
</dbReference>
<dbReference type="CDD" id="cd17391">
    <property type="entry name" value="MFS_MdtG_MDR_like"/>
    <property type="match status" value="1"/>
</dbReference>
<dbReference type="FunFam" id="1.20.1250.20:FF:000020">
    <property type="entry name" value="Multidrug resistance protein MdtG"/>
    <property type="match status" value="1"/>
</dbReference>
<dbReference type="FunFam" id="1.20.1250.20:FF:000022">
    <property type="entry name" value="Multidrug resistance protein MdtG"/>
    <property type="match status" value="1"/>
</dbReference>
<dbReference type="Gene3D" id="1.20.1250.20">
    <property type="entry name" value="MFS general substrate transporter like domains"/>
    <property type="match status" value="2"/>
</dbReference>
<dbReference type="HAMAP" id="MF_01528">
    <property type="entry name" value="MFS_MdtG"/>
    <property type="match status" value="1"/>
</dbReference>
<dbReference type="InterPro" id="IPR011701">
    <property type="entry name" value="MFS"/>
</dbReference>
<dbReference type="InterPro" id="IPR020846">
    <property type="entry name" value="MFS_dom"/>
</dbReference>
<dbReference type="InterPro" id="IPR050497">
    <property type="entry name" value="MFS_MdtG_subfamily"/>
</dbReference>
<dbReference type="InterPro" id="IPR005828">
    <property type="entry name" value="MFS_sugar_transport-like"/>
</dbReference>
<dbReference type="InterPro" id="IPR036259">
    <property type="entry name" value="MFS_trans_sf"/>
</dbReference>
<dbReference type="InterPro" id="IPR023692">
    <property type="entry name" value="Mutidrug-R_MdtG"/>
</dbReference>
<dbReference type="InterPro" id="IPR001958">
    <property type="entry name" value="Tet-R_TetA/multi-R_MdtG-like"/>
</dbReference>
<dbReference type="NCBIfam" id="NF007372">
    <property type="entry name" value="PRK09874.1"/>
    <property type="match status" value="1"/>
</dbReference>
<dbReference type="PANTHER" id="PTHR43414">
    <property type="entry name" value="MULTIDRUG RESISTANCE PROTEIN MDTG"/>
    <property type="match status" value="1"/>
</dbReference>
<dbReference type="PANTHER" id="PTHR43414:SF6">
    <property type="entry name" value="MULTIDRUG RESISTANCE PROTEIN MDTG"/>
    <property type="match status" value="1"/>
</dbReference>
<dbReference type="Pfam" id="PF07690">
    <property type="entry name" value="MFS_1"/>
    <property type="match status" value="1"/>
</dbReference>
<dbReference type="Pfam" id="PF00083">
    <property type="entry name" value="Sugar_tr"/>
    <property type="match status" value="1"/>
</dbReference>
<dbReference type="PRINTS" id="PR01035">
    <property type="entry name" value="TCRTETA"/>
</dbReference>
<dbReference type="SUPFAM" id="SSF103473">
    <property type="entry name" value="MFS general substrate transporter"/>
    <property type="match status" value="2"/>
</dbReference>
<dbReference type="PROSITE" id="PS50850">
    <property type="entry name" value="MFS"/>
    <property type="match status" value="1"/>
</dbReference>
<gene>
    <name evidence="1" type="primary">mdtG</name>
    <name type="ordered locus">SARI_01844</name>
</gene>